<name>SYN_STRPD</name>
<protein>
    <recommendedName>
        <fullName evidence="1">Asparagine--tRNA ligase</fullName>
        <ecNumber evidence="1">6.1.1.22</ecNumber>
    </recommendedName>
    <alternativeName>
        <fullName evidence="1">Asparaginyl-tRNA synthetase</fullName>
        <shortName evidence="1">AsnRS</shortName>
    </alternativeName>
</protein>
<reference key="1">
    <citation type="journal article" date="2006" name="Proc. Natl. Acad. Sci. U.S.A.">
        <title>Molecular genetic anatomy of inter- and intraserotype variation in the human bacterial pathogen group A Streptococcus.</title>
        <authorList>
            <person name="Beres S.B."/>
            <person name="Richter E.W."/>
            <person name="Nagiec M.J."/>
            <person name="Sumby P."/>
            <person name="Porcella S.F."/>
            <person name="DeLeo F.R."/>
            <person name="Musser J.M."/>
        </authorList>
    </citation>
    <scope>NUCLEOTIDE SEQUENCE [LARGE SCALE GENOMIC DNA]</scope>
    <source>
        <strain>MGAS10270</strain>
    </source>
</reference>
<keyword id="KW-0030">Aminoacyl-tRNA synthetase</keyword>
<keyword id="KW-0067">ATP-binding</keyword>
<keyword id="KW-0963">Cytoplasm</keyword>
<keyword id="KW-0436">Ligase</keyword>
<keyword id="KW-0547">Nucleotide-binding</keyword>
<keyword id="KW-0648">Protein biosynthesis</keyword>
<sequence length="448" mass="51208">MSKKLISIVDVKDYVGQEVTIGAWVANKSGKGKIAFVQLRDGSAFFQGVAFKPNFIEKYGEESGLEKFDVIKRLNQETSVYVTGIVKEDERSKFGYELDITDLEIIGESHEYPITPKEHGTDFLMDNRHLWLRSRKQMAVMQIRNAIIYATYEFFDQNGFIKFDSPILSENAAEDSTELFETDYFGKPAFLSQSGQLYLEAGAMALGRVFDFGPVFRAEKSKTRRHLTEFWMMDAEYSFLSHEESLDLQEAYVKALIQGVLDRAPQALDILERDVEALKRYITEPFKRVSYDDAITLLQEHEADEDTDYEHLEHGDDFGSPHETWISNYFGVPTFVVNYPASFKAFYMKPVPGNPERVLCADLLAPEGYGEIIGGSMREDNYDALVAKMDELGMDKSEYDFYLDLRKYGSVPHGGFGIGIERMVTFVAGTKHIREAIPFPRMLHRIRP</sequence>
<gene>
    <name evidence="1" type="primary">asnS</name>
    <name type="ordered locus">MGAS10270_Spy0532</name>
</gene>
<accession>Q1JHS6</accession>
<comment type="catalytic activity">
    <reaction evidence="1">
        <text>tRNA(Asn) + L-asparagine + ATP = L-asparaginyl-tRNA(Asn) + AMP + diphosphate + H(+)</text>
        <dbReference type="Rhea" id="RHEA:11180"/>
        <dbReference type="Rhea" id="RHEA-COMP:9659"/>
        <dbReference type="Rhea" id="RHEA-COMP:9674"/>
        <dbReference type="ChEBI" id="CHEBI:15378"/>
        <dbReference type="ChEBI" id="CHEBI:30616"/>
        <dbReference type="ChEBI" id="CHEBI:33019"/>
        <dbReference type="ChEBI" id="CHEBI:58048"/>
        <dbReference type="ChEBI" id="CHEBI:78442"/>
        <dbReference type="ChEBI" id="CHEBI:78515"/>
        <dbReference type="ChEBI" id="CHEBI:456215"/>
        <dbReference type="EC" id="6.1.1.22"/>
    </reaction>
</comment>
<comment type="subunit">
    <text evidence="1">Homodimer.</text>
</comment>
<comment type="subcellular location">
    <subcellularLocation>
        <location evidence="1">Cytoplasm</location>
    </subcellularLocation>
</comment>
<comment type="similarity">
    <text evidence="1">Belongs to the class-II aminoacyl-tRNA synthetase family.</text>
</comment>
<proteinExistence type="inferred from homology"/>
<evidence type="ECO:0000255" key="1">
    <source>
        <dbReference type="HAMAP-Rule" id="MF_00534"/>
    </source>
</evidence>
<feature type="chain" id="PRO_1000051444" description="Asparagine--tRNA ligase">
    <location>
        <begin position="1"/>
        <end position="448"/>
    </location>
</feature>
<organism>
    <name type="scientific">Streptococcus pyogenes serotype M2 (strain MGAS10270)</name>
    <dbReference type="NCBI Taxonomy" id="370552"/>
    <lineage>
        <taxon>Bacteria</taxon>
        <taxon>Bacillati</taxon>
        <taxon>Bacillota</taxon>
        <taxon>Bacilli</taxon>
        <taxon>Lactobacillales</taxon>
        <taxon>Streptococcaceae</taxon>
        <taxon>Streptococcus</taxon>
    </lineage>
</organism>
<dbReference type="EC" id="6.1.1.22" evidence="1"/>
<dbReference type="EMBL" id="CP000260">
    <property type="protein sequence ID" value="ABF33597.1"/>
    <property type="molecule type" value="Genomic_DNA"/>
</dbReference>
<dbReference type="RefSeq" id="WP_002985437.1">
    <property type="nucleotide sequence ID" value="NZ_CVUH01000002.1"/>
</dbReference>
<dbReference type="SMR" id="Q1JHS6"/>
<dbReference type="GeneID" id="69901153"/>
<dbReference type="KEGG" id="sph:MGAS10270_Spy0532"/>
<dbReference type="HOGENOM" id="CLU_004553_2_0_9"/>
<dbReference type="Proteomes" id="UP000002436">
    <property type="component" value="Chromosome"/>
</dbReference>
<dbReference type="GO" id="GO:0005737">
    <property type="term" value="C:cytoplasm"/>
    <property type="evidence" value="ECO:0007669"/>
    <property type="project" value="UniProtKB-SubCell"/>
</dbReference>
<dbReference type="GO" id="GO:0004816">
    <property type="term" value="F:asparagine-tRNA ligase activity"/>
    <property type="evidence" value="ECO:0007669"/>
    <property type="project" value="UniProtKB-UniRule"/>
</dbReference>
<dbReference type="GO" id="GO:0005524">
    <property type="term" value="F:ATP binding"/>
    <property type="evidence" value="ECO:0007669"/>
    <property type="project" value="UniProtKB-UniRule"/>
</dbReference>
<dbReference type="GO" id="GO:0140096">
    <property type="term" value="F:catalytic activity, acting on a protein"/>
    <property type="evidence" value="ECO:0007669"/>
    <property type="project" value="UniProtKB-ARBA"/>
</dbReference>
<dbReference type="GO" id="GO:0003676">
    <property type="term" value="F:nucleic acid binding"/>
    <property type="evidence" value="ECO:0007669"/>
    <property type="project" value="InterPro"/>
</dbReference>
<dbReference type="GO" id="GO:0016740">
    <property type="term" value="F:transferase activity"/>
    <property type="evidence" value="ECO:0007669"/>
    <property type="project" value="UniProtKB-ARBA"/>
</dbReference>
<dbReference type="GO" id="GO:0006421">
    <property type="term" value="P:asparaginyl-tRNA aminoacylation"/>
    <property type="evidence" value="ECO:0007669"/>
    <property type="project" value="UniProtKB-UniRule"/>
</dbReference>
<dbReference type="CDD" id="cd04323">
    <property type="entry name" value="AsnRS_cyto_like_N"/>
    <property type="match status" value="1"/>
</dbReference>
<dbReference type="CDD" id="cd00776">
    <property type="entry name" value="AsxRS_core"/>
    <property type="match status" value="1"/>
</dbReference>
<dbReference type="Gene3D" id="3.30.930.10">
    <property type="entry name" value="Bira Bifunctional Protein, Domain 2"/>
    <property type="match status" value="1"/>
</dbReference>
<dbReference type="Gene3D" id="2.40.50.140">
    <property type="entry name" value="Nucleic acid-binding proteins"/>
    <property type="match status" value="1"/>
</dbReference>
<dbReference type="HAMAP" id="MF_00534">
    <property type="entry name" value="Asn_tRNA_synth"/>
    <property type="match status" value="1"/>
</dbReference>
<dbReference type="InterPro" id="IPR004364">
    <property type="entry name" value="Aa-tRNA-synt_II"/>
</dbReference>
<dbReference type="InterPro" id="IPR006195">
    <property type="entry name" value="aa-tRNA-synth_II"/>
</dbReference>
<dbReference type="InterPro" id="IPR045864">
    <property type="entry name" value="aa-tRNA-synth_II/BPL/LPL"/>
</dbReference>
<dbReference type="InterPro" id="IPR004522">
    <property type="entry name" value="Asn-tRNA-ligase"/>
</dbReference>
<dbReference type="InterPro" id="IPR002312">
    <property type="entry name" value="Asp/Asn-tRNA-synth_IIb"/>
</dbReference>
<dbReference type="InterPro" id="IPR012340">
    <property type="entry name" value="NA-bd_OB-fold"/>
</dbReference>
<dbReference type="InterPro" id="IPR004365">
    <property type="entry name" value="NA-bd_OB_tRNA"/>
</dbReference>
<dbReference type="NCBIfam" id="TIGR00457">
    <property type="entry name" value="asnS"/>
    <property type="match status" value="1"/>
</dbReference>
<dbReference type="NCBIfam" id="NF003037">
    <property type="entry name" value="PRK03932.1"/>
    <property type="match status" value="1"/>
</dbReference>
<dbReference type="PANTHER" id="PTHR22594:SF34">
    <property type="entry name" value="ASPARAGINE--TRNA LIGASE, MITOCHONDRIAL-RELATED"/>
    <property type="match status" value="1"/>
</dbReference>
<dbReference type="PANTHER" id="PTHR22594">
    <property type="entry name" value="ASPARTYL/LYSYL-TRNA SYNTHETASE"/>
    <property type="match status" value="1"/>
</dbReference>
<dbReference type="Pfam" id="PF00152">
    <property type="entry name" value="tRNA-synt_2"/>
    <property type="match status" value="1"/>
</dbReference>
<dbReference type="Pfam" id="PF01336">
    <property type="entry name" value="tRNA_anti-codon"/>
    <property type="match status" value="1"/>
</dbReference>
<dbReference type="PRINTS" id="PR01042">
    <property type="entry name" value="TRNASYNTHASP"/>
</dbReference>
<dbReference type="SUPFAM" id="SSF55681">
    <property type="entry name" value="Class II aaRS and biotin synthetases"/>
    <property type="match status" value="1"/>
</dbReference>
<dbReference type="SUPFAM" id="SSF50249">
    <property type="entry name" value="Nucleic acid-binding proteins"/>
    <property type="match status" value="1"/>
</dbReference>
<dbReference type="PROSITE" id="PS50862">
    <property type="entry name" value="AA_TRNA_LIGASE_II"/>
    <property type="match status" value="1"/>
</dbReference>